<name>YM316_YEAST</name>
<dbReference type="EMBL" id="KJ412297">
    <property type="protein sequence ID" value="AHX39340.1"/>
    <property type="molecule type" value="Genomic_DNA"/>
</dbReference>
<dbReference type="PIR" id="S69877">
    <property type="entry name" value="S69877"/>
</dbReference>
<dbReference type="SMR" id="A0A023PXQ9"/>
<dbReference type="STRING" id="4932.YMR316C-B"/>
<dbReference type="PaxDb" id="4932-YMR316C-B"/>
<dbReference type="EnsemblFungi" id="YMR316C-B_mRNA">
    <property type="protein sequence ID" value="YMR316C-B"/>
    <property type="gene ID" value="YMR316C-B"/>
</dbReference>
<dbReference type="AGR" id="SGD:S000004934"/>
<dbReference type="SGD" id="S000004934">
    <property type="gene designation" value="YMR316C-B"/>
</dbReference>
<dbReference type="HOGENOM" id="CLU_2279082_0_0_1"/>
<dbReference type="GO" id="GO:0016020">
    <property type="term" value="C:membrane"/>
    <property type="evidence" value="ECO:0007669"/>
    <property type="project" value="UniProtKB-SubCell"/>
</dbReference>
<comment type="subcellular location">
    <subcellularLocation>
        <location evidence="1">Membrane</location>
        <topology evidence="1">Multi-pass membrane protein</topology>
    </subcellularLocation>
</comment>
<comment type="miscellaneous">
    <text evidence="2">Partially overlaps YMR317W.</text>
</comment>
<comment type="caution">
    <text evidence="3">Product of a dubious gene prediction unlikely to encode a functional protein. Because of that it is not part of the S.cerevisiae S288c complete/reference proteome set.</text>
</comment>
<accession>A0A023PXQ9</accession>
<proteinExistence type="uncertain"/>
<reference key="1">
    <citation type="journal article" date="1997" name="Nature">
        <title>The nucleotide sequence of Saccharomyces cerevisiae chromosome XIII.</title>
        <authorList>
            <person name="Bowman S."/>
            <person name="Churcher C.M."/>
            <person name="Badcock K."/>
            <person name="Brown D."/>
            <person name="Chillingworth T."/>
            <person name="Connor R."/>
            <person name="Dedman K."/>
            <person name="Devlin K."/>
            <person name="Gentles S."/>
            <person name="Hamlin N."/>
            <person name="Hunt S."/>
            <person name="Jagels K."/>
            <person name="Lye G."/>
            <person name="Moule S."/>
            <person name="Odell C."/>
            <person name="Pearson D."/>
            <person name="Rajandream M.A."/>
            <person name="Rice P."/>
            <person name="Skelton J."/>
            <person name="Walsh S.V."/>
            <person name="Whitehead S."/>
            <person name="Barrell B.G."/>
        </authorList>
    </citation>
    <scope>NUCLEOTIDE SEQUENCE [LARGE SCALE GENOMIC DNA]</scope>
    <source>
        <strain>ATCC 204508 / S288c</strain>
    </source>
</reference>
<reference key="2">
    <citation type="journal article" date="2014" name="G3 (Bethesda)">
        <title>The reference genome sequence of Saccharomyces cerevisiae: Then and now.</title>
        <authorList>
            <person name="Engel S.R."/>
            <person name="Dietrich F.S."/>
            <person name="Fisk D.G."/>
            <person name="Binkley G."/>
            <person name="Balakrishnan R."/>
            <person name="Costanzo M.C."/>
            <person name="Dwight S.S."/>
            <person name="Hitz B.C."/>
            <person name="Karra K."/>
            <person name="Nash R.S."/>
            <person name="Weng S."/>
            <person name="Wong E.D."/>
            <person name="Lloyd P."/>
            <person name="Skrzypek M.S."/>
            <person name="Miyasato S.R."/>
            <person name="Simison M."/>
            <person name="Cherry J.M."/>
        </authorList>
    </citation>
    <scope>GENOME REANNOTATION</scope>
    <source>
        <strain>ATCC 204508 / S288c</strain>
    </source>
</reference>
<evidence type="ECO:0000255" key="1"/>
<evidence type="ECO:0000305" key="2"/>
<evidence type="ECO:0000305" key="3">
    <source>
    </source>
</evidence>
<evidence type="ECO:0000312" key="4">
    <source>
        <dbReference type="SGD" id="S000004934"/>
    </source>
</evidence>
<sequence>METNDSDDRIEAIVSEESDELEVNSGTTEETNVLELLTIISGLVVTLVLVVLVVLVVVGVVVLVVLLVVVVLLCDVVVAVVDFEPDEPILIRRYPFLWIPFL</sequence>
<feature type="chain" id="PRO_0000431049" description="Putative uncharacterized membrane protein YMR316C-B">
    <location>
        <begin position="1"/>
        <end position="102"/>
    </location>
</feature>
<feature type="transmembrane region" description="Helical; Name=1" evidence="1">
    <location>
        <begin position="33"/>
        <end position="55"/>
    </location>
</feature>
<feature type="transmembrane region" description="Helical; Name=2" evidence="1">
    <location>
        <begin position="57"/>
        <end position="79"/>
    </location>
</feature>
<keyword id="KW-0472">Membrane</keyword>
<keyword id="KW-0812">Transmembrane</keyword>
<keyword id="KW-1133">Transmembrane helix</keyword>
<protein>
    <recommendedName>
        <fullName evidence="2">Putative uncharacterized membrane protein YMR316C-B</fullName>
    </recommendedName>
</protein>
<organism>
    <name type="scientific">Saccharomyces cerevisiae (strain ATCC 204508 / S288c)</name>
    <name type="common">Baker's yeast</name>
    <dbReference type="NCBI Taxonomy" id="559292"/>
    <lineage>
        <taxon>Eukaryota</taxon>
        <taxon>Fungi</taxon>
        <taxon>Dikarya</taxon>
        <taxon>Ascomycota</taxon>
        <taxon>Saccharomycotina</taxon>
        <taxon>Saccharomycetes</taxon>
        <taxon>Saccharomycetales</taxon>
        <taxon>Saccharomycetaceae</taxon>
        <taxon>Saccharomyces</taxon>
    </lineage>
</organism>
<gene>
    <name evidence="4" type="ordered locus">YMR316C-B</name>
</gene>